<feature type="chain" id="PRO_1000097574" description="Queuine tRNA-ribosyltransferase">
    <location>
        <begin position="1"/>
        <end position="375"/>
    </location>
</feature>
<feature type="region of interest" description="RNA binding" evidence="1">
    <location>
        <begin position="249"/>
        <end position="255"/>
    </location>
</feature>
<feature type="region of interest" description="RNA binding; important for wobble base 34 recognition" evidence="1">
    <location>
        <begin position="273"/>
        <end position="277"/>
    </location>
</feature>
<feature type="active site" description="Proton acceptor" evidence="1">
    <location>
        <position position="94"/>
    </location>
</feature>
<feature type="active site" description="Nucleophile" evidence="1">
    <location>
        <position position="268"/>
    </location>
</feature>
<feature type="binding site" evidence="1">
    <location>
        <begin position="94"/>
        <end position="98"/>
    </location>
    <ligand>
        <name>substrate</name>
    </ligand>
</feature>
<feature type="binding site" evidence="1">
    <location>
        <position position="148"/>
    </location>
    <ligand>
        <name>substrate</name>
    </ligand>
</feature>
<feature type="binding site" evidence="1">
    <location>
        <position position="191"/>
    </location>
    <ligand>
        <name>substrate</name>
    </ligand>
</feature>
<feature type="binding site" evidence="1">
    <location>
        <position position="218"/>
    </location>
    <ligand>
        <name>substrate</name>
    </ligand>
</feature>
<feature type="binding site" evidence="1">
    <location>
        <position position="306"/>
    </location>
    <ligand>
        <name>Zn(2+)</name>
        <dbReference type="ChEBI" id="CHEBI:29105"/>
    </ligand>
</feature>
<feature type="binding site" evidence="1">
    <location>
        <position position="308"/>
    </location>
    <ligand>
        <name>Zn(2+)</name>
        <dbReference type="ChEBI" id="CHEBI:29105"/>
    </ligand>
</feature>
<feature type="binding site" evidence="1">
    <location>
        <position position="311"/>
    </location>
    <ligand>
        <name>Zn(2+)</name>
        <dbReference type="ChEBI" id="CHEBI:29105"/>
    </ligand>
</feature>
<feature type="binding site" evidence="1">
    <location>
        <position position="337"/>
    </location>
    <ligand>
        <name>Zn(2+)</name>
        <dbReference type="ChEBI" id="CHEBI:29105"/>
    </ligand>
</feature>
<reference key="1">
    <citation type="submission" date="2008-01" db="EMBL/GenBank/DDBJ databases">
        <title>Complete sequence of Thermoanaerobacter sp. X514.</title>
        <authorList>
            <consortium name="US DOE Joint Genome Institute"/>
            <person name="Copeland A."/>
            <person name="Lucas S."/>
            <person name="Lapidus A."/>
            <person name="Barry K."/>
            <person name="Glavina del Rio T."/>
            <person name="Dalin E."/>
            <person name="Tice H."/>
            <person name="Pitluck S."/>
            <person name="Bruce D."/>
            <person name="Goodwin L."/>
            <person name="Saunders E."/>
            <person name="Brettin T."/>
            <person name="Detter J.C."/>
            <person name="Han C."/>
            <person name="Schmutz J."/>
            <person name="Larimer F."/>
            <person name="Land M."/>
            <person name="Hauser L."/>
            <person name="Kyrpides N."/>
            <person name="Kim E."/>
            <person name="Hemme C."/>
            <person name="Fields M.W."/>
            <person name="He Z."/>
            <person name="Zhou J."/>
            <person name="Richardson P."/>
        </authorList>
    </citation>
    <scope>NUCLEOTIDE SEQUENCE [LARGE SCALE GENOMIC DNA]</scope>
    <source>
        <strain>X514</strain>
    </source>
</reference>
<keyword id="KW-0328">Glycosyltransferase</keyword>
<keyword id="KW-0479">Metal-binding</keyword>
<keyword id="KW-0671">Queuosine biosynthesis</keyword>
<keyword id="KW-0808">Transferase</keyword>
<keyword id="KW-0819">tRNA processing</keyword>
<keyword id="KW-0862">Zinc</keyword>
<evidence type="ECO:0000255" key="1">
    <source>
        <dbReference type="HAMAP-Rule" id="MF_00168"/>
    </source>
</evidence>
<proteinExistence type="inferred from homology"/>
<organism>
    <name type="scientific">Thermoanaerobacter sp. (strain X514)</name>
    <dbReference type="NCBI Taxonomy" id="399726"/>
    <lineage>
        <taxon>Bacteria</taxon>
        <taxon>Bacillati</taxon>
        <taxon>Bacillota</taxon>
        <taxon>Clostridia</taxon>
        <taxon>Thermoanaerobacterales</taxon>
        <taxon>Thermoanaerobacteraceae</taxon>
        <taxon>Thermoanaerobacter</taxon>
    </lineage>
</organism>
<name>TGT_THEPX</name>
<dbReference type="EC" id="2.4.2.29" evidence="1"/>
<dbReference type="EMBL" id="CP000923">
    <property type="protein sequence ID" value="ABY92746.1"/>
    <property type="molecule type" value="Genomic_DNA"/>
</dbReference>
<dbReference type="RefSeq" id="WP_009052291.1">
    <property type="nucleotide sequence ID" value="NC_010320.1"/>
</dbReference>
<dbReference type="SMR" id="B0K0M1"/>
<dbReference type="KEGG" id="tex:Teth514_1457"/>
<dbReference type="HOGENOM" id="CLU_022060_0_1_9"/>
<dbReference type="UniPathway" id="UPA00392"/>
<dbReference type="Proteomes" id="UP000002155">
    <property type="component" value="Chromosome"/>
</dbReference>
<dbReference type="GO" id="GO:0005829">
    <property type="term" value="C:cytosol"/>
    <property type="evidence" value="ECO:0007669"/>
    <property type="project" value="TreeGrafter"/>
</dbReference>
<dbReference type="GO" id="GO:0046872">
    <property type="term" value="F:metal ion binding"/>
    <property type="evidence" value="ECO:0007669"/>
    <property type="project" value="UniProtKB-KW"/>
</dbReference>
<dbReference type="GO" id="GO:0008479">
    <property type="term" value="F:tRNA-guanosine(34) queuine transglycosylase activity"/>
    <property type="evidence" value="ECO:0007669"/>
    <property type="project" value="UniProtKB-UniRule"/>
</dbReference>
<dbReference type="GO" id="GO:0008616">
    <property type="term" value="P:queuosine biosynthetic process"/>
    <property type="evidence" value="ECO:0007669"/>
    <property type="project" value="UniProtKB-UniRule"/>
</dbReference>
<dbReference type="GO" id="GO:0002099">
    <property type="term" value="P:tRNA wobble guanine modification"/>
    <property type="evidence" value="ECO:0007669"/>
    <property type="project" value="TreeGrafter"/>
</dbReference>
<dbReference type="GO" id="GO:0101030">
    <property type="term" value="P:tRNA-guanine transglycosylation"/>
    <property type="evidence" value="ECO:0007669"/>
    <property type="project" value="InterPro"/>
</dbReference>
<dbReference type="FunFam" id="3.20.20.105:FF:000001">
    <property type="entry name" value="Queuine tRNA-ribosyltransferase"/>
    <property type="match status" value="1"/>
</dbReference>
<dbReference type="Gene3D" id="3.20.20.105">
    <property type="entry name" value="Queuine tRNA-ribosyltransferase-like"/>
    <property type="match status" value="1"/>
</dbReference>
<dbReference type="HAMAP" id="MF_00168">
    <property type="entry name" value="Q_tRNA_Tgt"/>
    <property type="match status" value="1"/>
</dbReference>
<dbReference type="InterPro" id="IPR050076">
    <property type="entry name" value="ArchSynthase1/Queuine_TRR"/>
</dbReference>
<dbReference type="InterPro" id="IPR004803">
    <property type="entry name" value="TGT"/>
</dbReference>
<dbReference type="InterPro" id="IPR036511">
    <property type="entry name" value="TGT-like_sf"/>
</dbReference>
<dbReference type="InterPro" id="IPR002616">
    <property type="entry name" value="tRNA_ribo_trans-like"/>
</dbReference>
<dbReference type="NCBIfam" id="TIGR00430">
    <property type="entry name" value="Q_tRNA_tgt"/>
    <property type="match status" value="1"/>
</dbReference>
<dbReference type="NCBIfam" id="TIGR00449">
    <property type="entry name" value="tgt_general"/>
    <property type="match status" value="1"/>
</dbReference>
<dbReference type="PANTHER" id="PTHR46499">
    <property type="entry name" value="QUEUINE TRNA-RIBOSYLTRANSFERASE"/>
    <property type="match status" value="1"/>
</dbReference>
<dbReference type="PANTHER" id="PTHR46499:SF1">
    <property type="entry name" value="QUEUINE TRNA-RIBOSYLTRANSFERASE"/>
    <property type="match status" value="1"/>
</dbReference>
<dbReference type="Pfam" id="PF01702">
    <property type="entry name" value="TGT"/>
    <property type="match status" value="1"/>
</dbReference>
<dbReference type="SUPFAM" id="SSF51713">
    <property type="entry name" value="tRNA-guanine transglycosylase"/>
    <property type="match status" value="1"/>
</dbReference>
<protein>
    <recommendedName>
        <fullName evidence="1">Queuine tRNA-ribosyltransferase</fullName>
        <ecNumber evidence="1">2.4.2.29</ecNumber>
    </recommendedName>
    <alternativeName>
        <fullName evidence="1">Guanine insertion enzyme</fullName>
    </alternativeName>
    <alternativeName>
        <fullName evidence="1">tRNA-guanine transglycosylase</fullName>
    </alternativeName>
</protein>
<accession>B0K0M1</accession>
<comment type="function">
    <text evidence="1">Catalyzes the base-exchange of a guanine (G) residue with the queuine precursor 7-aminomethyl-7-deazaguanine (PreQ1) at position 34 (anticodon wobble position) in tRNAs with GU(N) anticodons (tRNA-Asp, -Asn, -His and -Tyr). Catalysis occurs through a double-displacement mechanism. The nucleophile active site attacks the C1' of nucleotide 34 to detach the guanine base from the RNA, forming a covalent enzyme-RNA intermediate. The proton acceptor active site deprotonates the incoming PreQ1, allowing a nucleophilic attack on the C1' of the ribose to form the product. After dissociation, two additional enzymatic reactions on the tRNA convert PreQ1 to queuine (Q), resulting in the hypermodified nucleoside queuosine (7-(((4,5-cis-dihydroxy-2-cyclopenten-1-yl)amino)methyl)-7-deazaguanosine).</text>
</comment>
<comment type="catalytic activity">
    <reaction evidence="1">
        <text>7-aminomethyl-7-carbaguanine + guanosine(34) in tRNA = 7-aminomethyl-7-carbaguanosine(34) in tRNA + guanine</text>
        <dbReference type="Rhea" id="RHEA:24104"/>
        <dbReference type="Rhea" id="RHEA-COMP:10341"/>
        <dbReference type="Rhea" id="RHEA-COMP:10342"/>
        <dbReference type="ChEBI" id="CHEBI:16235"/>
        <dbReference type="ChEBI" id="CHEBI:58703"/>
        <dbReference type="ChEBI" id="CHEBI:74269"/>
        <dbReference type="ChEBI" id="CHEBI:82833"/>
        <dbReference type="EC" id="2.4.2.29"/>
    </reaction>
</comment>
<comment type="cofactor">
    <cofactor evidence="1">
        <name>Zn(2+)</name>
        <dbReference type="ChEBI" id="CHEBI:29105"/>
    </cofactor>
    <text evidence="1">Binds 1 zinc ion per subunit.</text>
</comment>
<comment type="pathway">
    <text evidence="1">tRNA modification; tRNA-queuosine biosynthesis.</text>
</comment>
<comment type="subunit">
    <text evidence="1">Homodimer. Within each dimer, one monomer is responsible for RNA recognition and catalysis, while the other monomer binds to the replacement base PreQ1.</text>
</comment>
<comment type="similarity">
    <text evidence="1">Belongs to the queuine tRNA-ribosyltransferase family.</text>
</comment>
<gene>
    <name evidence="1" type="primary">tgt</name>
    <name type="ordered locus">Teth514_1457</name>
</gene>
<sequence length="375" mass="42930">MAAIKYRLIKKDSRTNARLGILETPHGVIETPVFMPVGTQATVKAMTPEELKEIGATIILSNTYHLYLRPGHKIIEKAGGLHRFMNWDRAILTDSGGFQIFSLSSLRKIKEEGVEFRSHIDGSKHFFTPEKVIEIQNALGSDIIMSFDECAPYPADYEYVKNSMELTIKWAERGKKAHKNTEKQALFGIVQGGIYEDLRKECAQRLVEMDFPGYSIGGLSVGEPKNVMYDIVDLTTEYLPENKPRYLMGVGSPDDLIEGVIRGVDMFDCVLPTRIARNGTVFTSKGKLIVRDAPYAEDFSPLDEECDCYTCKNYSRAYIRHLFKANEILAARLATIHNLYFLIKLMERIREAIRQDRLLEFKKQFFKKYGYKEEY</sequence>